<sequence length="457" mass="49766">MSKRYAVVLAAGQGTRMKSKLYKVLHPVCGKPMVEHVVDQISTLDVDKVVTIVGHGAEKVQEHLAGKSEFVKQDEQLGTAHAVLQAKSELAGKDGVTLVVCGDTPLIEASTMEALLKYHHEKRAKATILTTVIEDPTGYGRIIRDDLGIVEKIVEHKDATEKEQRISEINTGTYCFDNKALFEALENVSNDNVQGEYYLPDVIKILKDADEVVAAYKMESFEESLGVNDRIALAEASKLMQRRINENHMRNGVTLVNPENTYIDIDVKIGQDTVIEPGVMLRGKTVIGDDCVVTSGSEIVSSVIGERVHVRNSSIFESKVGDDVQIGPYAHLRPESDIHNHVKIGNYVETKKAVVGEGTKLPHFIYMGDAEIGKNVNVGCGSIAVNYDGKNKAKTIIGDNVFVGCNSNLIAPVKVGDRAFIAAGSTITKDVPEDALGIARAKQDNKLGYAKHLNHGK</sequence>
<gene>
    <name evidence="1" type="primary">glmU</name>
    <name type="ordered locus">lin0237</name>
</gene>
<reference key="1">
    <citation type="journal article" date="2001" name="Science">
        <title>Comparative genomics of Listeria species.</title>
        <authorList>
            <person name="Glaser P."/>
            <person name="Frangeul L."/>
            <person name="Buchrieser C."/>
            <person name="Rusniok C."/>
            <person name="Amend A."/>
            <person name="Baquero F."/>
            <person name="Berche P."/>
            <person name="Bloecker H."/>
            <person name="Brandt P."/>
            <person name="Chakraborty T."/>
            <person name="Charbit A."/>
            <person name="Chetouani F."/>
            <person name="Couve E."/>
            <person name="de Daruvar A."/>
            <person name="Dehoux P."/>
            <person name="Domann E."/>
            <person name="Dominguez-Bernal G."/>
            <person name="Duchaud E."/>
            <person name="Durant L."/>
            <person name="Dussurget O."/>
            <person name="Entian K.-D."/>
            <person name="Fsihi H."/>
            <person name="Garcia-del Portillo F."/>
            <person name="Garrido P."/>
            <person name="Gautier L."/>
            <person name="Goebel W."/>
            <person name="Gomez-Lopez N."/>
            <person name="Hain T."/>
            <person name="Hauf J."/>
            <person name="Jackson D."/>
            <person name="Jones L.-M."/>
            <person name="Kaerst U."/>
            <person name="Kreft J."/>
            <person name="Kuhn M."/>
            <person name="Kunst F."/>
            <person name="Kurapkat G."/>
            <person name="Madueno E."/>
            <person name="Maitournam A."/>
            <person name="Mata Vicente J."/>
            <person name="Ng E."/>
            <person name="Nedjari H."/>
            <person name="Nordsiek G."/>
            <person name="Novella S."/>
            <person name="de Pablos B."/>
            <person name="Perez-Diaz J.-C."/>
            <person name="Purcell R."/>
            <person name="Remmel B."/>
            <person name="Rose M."/>
            <person name="Schlueter T."/>
            <person name="Simoes N."/>
            <person name="Tierrez A."/>
            <person name="Vazquez-Boland J.-A."/>
            <person name="Voss H."/>
            <person name="Wehland J."/>
            <person name="Cossart P."/>
        </authorList>
    </citation>
    <scope>NUCLEOTIDE SEQUENCE [LARGE SCALE GENOMIC DNA]</scope>
    <source>
        <strain>ATCC BAA-680 / CLIP 11262</strain>
    </source>
</reference>
<feature type="chain" id="PRO_0000233794" description="Bifunctional protein GlmU">
    <location>
        <begin position="1"/>
        <end position="457"/>
    </location>
</feature>
<feature type="region of interest" description="Pyrophosphorylase" evidence="1">
    <location>
        <begin position="1"/>
        <end position="230"/>
    </location>
</feature>
<feature type="region of interest" description="Linker" evidence="1">
    <location>
        <begin position="231"/>
        <end position="251"/>
    </location>
</feature>
<feature type="region of interest" description="N-acetyltransferase" evidence="1">
    <location>
        <begin position="252"/>
        <end position="457"/>
    </location>
</feature>
<feature type="active site" description="Proton acceptor" evidence="1">
    <location>
        <position position="363"/>
    </location>
</feature>
<feature type="binding site" evidence="1">
    <location>
        <begin position="9"/>
        <end position="12"/>
    </location>
    <ligand>
        <name>UDP-N-acetyl-alpha-D-glucosamine</name>
        <dbReference type="ChEBI" id="CHEBI:57705"/>
    </ligand>
</feature>
<feature type="binding site" evidence="1">
    <location>
        <position position="23"/>
    </location>
    <ligand>
        <name>UDP-N-acetyl-alpha-D-glucosamine</name>
        <dbReference type="ChEBI" id="CHEBI:57705"/>
    </ligand>
</feature>
<feature type="binding site" evidence="1">
    <location>
        <position position="73"/>
    </location>
    <ligand>
        <name>UDP-N-acetyl-alpha-D-glucosamine</name>
        <dbReference type="ChEBI" id="CHEBI:57705"/>
    </ligand>
</feature>
<feature type="binding site" evidence="1">
    <location>
        <begin position="78"/>
        <end position="79"/>
    </location>
    <ligand>
        <name>UDP-N-acetyl-alpha-D-glucosamine</name>
        <dbReference type="ChEBI" id="CHEBI:57705"/>
    </ligand>
</feature>
<feature type="binding site" evidence="1">
    <location>
        <position position="103"/>
    </location>
    <ligand>
        <name>Mg(2+)</name>
        <dbReference type="ChEBI" id="CHEBI:18420"/>
    </ligand>
</feature>
<feature type="binding site" evidence="1">
    <location>
        <position position="140"/>
    </location>
    <ligand>
        <name>UDP-N-acetyl-alpha-D-glucosamine</name>
        <dbReference type="ChEBI" id="CHEBI:57705"/>
    </ligand>
</feature>
<feature type="binding site" evidence="1">
    <location>
        <position position="155"/>
    </location>
    <ligand>
        <name>UDP-N-acetyl-alpha-D-glucosamine</name>
        <dbReference type="ChEBI" id="CHEBI:57705"/>
    </ligand>
</feature>
<feature type="binding site" evidence="1">
    <location>
        <position position="170"/>
    </location>
    <ligand>
        <name>UDP-N-acetyl-alpha-D-glucosamine</name>
        <dbReference type="ChEBI" id="CHEBI:57705"/>
    </ligand>
</feature>
<feature type="binding site" evidence="1">
    <location>
        <position position="228"/>
    </location>
    <ligand>
        <name>Mg(2+)</name>
        <dbReference type="ChEBI" id="CHEBI:18420"/>
    </ligand>
</feature>
<feature type="binding site" evidence="1">
    <location>
        <position position="228"/>
    </location>
    <ligand>
        <name>UDP-N-acetyl-alpha-D-glucosamine</name>
        <dbReference type="ChEBI" id="CHEBI:57705"/>
    </ligand>
</feature>
<feature type="binding site" evidence="1">
    <location>
        <position position="333"/>
    </location>
    <ligand>
        <name>UDP-N-acetyl-alpha-D-glucosamine</name>
        <dbReference type="ChEBI" id="CHEBI:57705"/>
    </ligand>
</feature>
<feature type="binding site" evidence="1">
    <location>
        <position position="351"/>
    </location>
    <ligand>
        <name>UDP-N-acetyl-alpha-D-glucosamine</name>
        <dbReference type="ChEBI" id="CHEBI:57705"/>
    </ligand>
</feature>
<feature type="binding site" evidence="1">
    <location>
        <position position="366"/>
    </location>
    <ligand>
        <name>UDP-N-acetyl-alpha-D-glucosamine</name>
        <dbReference type="ChEBI" id="CHEBI:57705"/>
    </ligand>
</feature>
<feature type="binding site" evidence="1">
    <location>
        <position position="377"/>
    </location>
    <ligand>
        <name>UDP-N-acetyl-alpha-D-glucosamine</name>
        <dbReference type="ChEBI" id="CHEBI:57705"/>
    </ligand>
</feature>
<feature type="binding site" evidence="1">
    <location>
        <begin position="386"/>
        <end position="387"/>
    </location>
    <ligand>
        <name>acetyl-CoA</name>
        <dbReference type="ChEBI" id="CHEBI:57288"/>
    </ligand>
</feature>
<feature type="binding site" evidence="1">
    <location>
        <position position="423"/>
    </location>
    <ligand>
        <name>acetyl-CoA</name>
        <dbReference type="ChEBI" id="CHEBI:57288"/>
    </ligand>
</feature>
<feature type="binding site" evidence="1">
    <location>
        <position position="440"/>
    </location>
    <ligand>
        <name>acetyl-CoA</name>
        <dbReference type="ChEBI" id="CHEBI:57288"/>
    </ligand>
</feature>
<keyword id="KW-0012">Acyltransferase</keyword>
<keyword id="KW-0133">Cell shape</keyword>
<keyword id="KW-0961">Cell wall biogenesis/degradation</keyword>
<keyword id="KW-0963">Cytoplasm</keyword>
<keyword id="KW-0460">Magnesium</keyword>
<keyword id="KW-0479">Metal-binding</keyword>
<keyword id="KW-0511">Multifunctional enzyme</keyword>
<keyword id="KW-0548">Nucleotidyltransferase</keyword>
<keyword id="KW-0573">Peptidoglycan synthesis</keyword>
<keyword id="KW-0677">Repeat</keyword>
<keyword id="KW-0808">Transferase</keyword>
<accession>Q92F69</accession>
<comment type="function">
    <text evidence="1">Catalyzes the last two sequential reactions in the de novo biosynthetic pathway for UDP-N-acetylglucosamine (UDP-GlcNAc). The C-terminal domain catalyzes the transfer of acetyl group from acetyl coenzyme A to glucosamine-1-phosphate (GlcN-1-P) to produce N-acetylglucosamine-1-phosphate (GlcNAc-1-P), which is converted into UDP-GlcNAc by the transfer of uridine 5-monophosphate (from uridine 5-triphosphate), a reaction catalyzed by the N-terminal domain.</text>
</comment>
<comment type="catalytic activity">
    <reaction evidence="1">
        <text>alpha-D-glucosamine 1-phosphate + acetyl-CoA = N-acetyl-alpha-D-glucosamine 1-phosphate + CoA + H(+)</text>
        <dbReference type="Rhea" id="RHEA:13725"/>
        <dbReference type="ChEBI" id="CHEBI:15378"/>
        <dbReference type="ChEBI" id="CHEBI:57287"/>
        <dbReference type="ChEBI" id="CHEBI:57288"/>
        <dbReference type="ChEBI" id="CHEBI:57776"/>
        <dbReference type="ChEBI" id="CHEBI:58516"/>
        <dbReference type="EC" id="2.3.1.157"/>
    </reaction>
</comment>
<comment type="catalytic activity">
    <reaction evidence="1">
        <text>N-acetyl-alpha-D-glucosamine 1-phosphate + UTP + H(+) = UDP-N-acetyl-alpha-D-glucosamine + diphosphate</text>
        <dbReference type="Rhea" id="RHEA:13509"/>
        <dbReference type="ChEBI" id="CHEBI:15378"/>
        <dbReference type="ChEBI" id="CHEBI:33019"/>
        <dbReference type="ChEBI" id="CHEBI:46398"/>
        <dbReference type="ChEBI" id="CHEBI:57705"/>
        <dbReference type="ChEBI" id="CHEBI:57776"/>
        <dbReference type="EC" id="2.7.7.23"/>
    </reaction>
</comment>
<comment type="cofactor">
    <cofactor evidence="1">
        <name>Mg(2+)</name>
        <dbReference type="ChEBI" id="CHEBI:18420"/>
    </cofactor>
    <text evidence="1">Binds 1 Mg(2+) ion per subunit.</text>
</comment>
<comment type="pathway">
    <text evidence="1">Nucleotide-sugar biosynthesis; UDP-N-acetyl-alpha-D-glucosamine biosynthesis; N-acetyl-alpha-D-glucosamine 1-phosphate from alpha-D-glucosamine 6-phosphate (route II): step 2/2.</text>
</comment>
<comment type="pathway">
    <text evidence="1">Nucleotide-sugar biosynthesis; UDP-N-acetyl-alpha-D-glucosamine biosynthesis; UDP-N-acetyl-alpha-D-glucosamine from N-acetyl-alpha-D-glucosamine 1-phosphate: step 1/1.</text>
</comment>
<comment type="pathway">
    <text evidence="1">Bacterial outer membrane biogenesis; LPS lipid A biosynthesis.</text>
</comment>
<comment type="subunit">
    <text evidence="1">Homotrimer.</text>
</comment>
<comment type="subcellular location">
    <subcellularLocation>
        <location evidence="1">Cytoplasm</location>
    </subcellularLocation>
</comment>
<comment type="similarity">
    <text evidence="1">In the N-terminal section; belongs to the N-acetylglucosamine-1-phosphate uridyltransferase family.</text>
</comment>
<comment type="similarity">
    <text evidence="1">In the C-terminal section; belongs to the transferase hexapeptide repeat family.</text>
</comment>
<dbReference type="EC" id="2.7.7.23" evidence="1"/>
<dbReference type="EC" id="2.3.1.157" evidence="1"/>
<dbReference type="EMBL" id="AL596164">
    <property type="protein sequence ID" value="CAC95470.1"/>
    <property type="molecule type" value="Genomic_DNA"/>
</dbReference>
<dbReference type="PIR" id="AF1462">
    <property type="entry name" value="AF1462"/>
</dbReference>
<dbReference type="RefSeq" id="WP_010990291.1">
    <property type="nucleotide sequence ID" value="NC_003212.1"/>
</dbReference>
<dbReference type="SMR" id="Q92F69"/>
<dbReference type="STRING" id="272626.gene:17564549"/>
<dbReference type="GeneID" id="93233672"/>
<dbReference type="KEGG" id="lin:gcaD"/>
<dbReference type="eggNOG" id="COG1207">
    <property type="taxonomic scope" value="Bacteria"/>
</dbReference>
<dbReference type="HOGENOM" id="CLU_029499_15_2_9"/>
<dbReference type="OrthoDB" id="9775031at2"/>
<dbReference type="UniPathway" id="UPA00113">
    <property type="reaction ID" value="UER00532"/>
</dbReference>
<dbReference type="UniPathway" id="UPA00113">
    <property type="reaction ID" value="UER00533"/>
</dbReference>
<dbReference type="UniPathway" id="UPA00973"/>
<dbReference type="Proteomes" id="UP000002513">
    <property type="component" value="Chromosome"/>
</dbReference>
<dbReference type="GO" id="GO:0005737">
    <property type="term" value="C:cytoplasm"/>
    <property type="evidence" value="ECO:0007669"/>
    <property type="project" value="UniProtKB-SubCell"/>
</dbReference>
<dbReference type="GO" id="GO:0016020">
    <property type="term" value="C:membrane"/>
    <property type="evidence" value="ECO:0007669"/>
    <property type="project" value="GOC"/>
</dbReference>
<dbReference type="GO" id="GO:0019134">
    <property type="term" value="F:glucosamine-1-phosphate N-acetyltransferase activity"/>
    <property type="evidence" value="ECO:0007669"/>
    <property type="project" value="UniProtKB-UniRule"/>
</dbReference>
<dbReference type="GO" id="GO:0000287">
    <property type="term" value="F:magnesium ion binding"/>
    <property type="evidence" value="ECO:0007669"/>
    <property type="project" value="UniProtKB-UniRule"/>
</dbReference>
<dbReference type="GO" id="GO:0003977">
    <property type="term" value="F:UDP-N-acetylglucosamine diphosphorylase activity"/>
    <property type="evidence" value="ECO:0007669"/>
    <property type="project" value="UniProtKB-UniRule"/>
</dbReference>
<dbReference type="GO" id="GO:0000902">
    <property type="term" value="P:cell morphogenesis"/>
    <property type="evidence" value="ECO:0007669"/>
    <property type="project" value="UniProtKB-UniRule"/>
</dbReference>
<dbReference type="GO" id="GO:0071555">
    <property type="term" value="P:cell wall organization"/>
    <property type="evidence" value="ECO:0007669"/>
    <property type="project" value="UniProtKB-KW"/>
</dbReference>
<dbReference type="GO" id="GO:0009245">
    <property type="term" value="P:lipid A biosynthetic process"/>
    <property type="evidence" value="ECO:0007669"/>
    <property type="project" value="UniProtKB-UniRule"/>
</dbReference>
<dbReference type="GO" id="GO:0009252">
    <property type="term" value="P:peptidoglycan biosynthetic process"/>
    <property type="evidence" value="ECO:0007669"/>
    <property type="project" value="UniProtKB-UniRule"/>
</dbReference>
<dbReference type="GO" id="GO:0008360">
    <property type="term" value="P:regulation of cell shape"/>
    <property type="evidence" value="ECO:0007669"/>
    <property type="project" value="UniProtKB-KW"/>
</dbReference>
<dbReference type="GO" id="GO:0006048">
    <property type="term" value="P:UDP-N-acetylglucosamine biosynthetic process"/>
    <property type="evidence" value="ECO:0007669"/>
    <property type="project" value="UniProtKB-UniPathway"/>
</dbReference>
<dbReference type="CDD" id="cd02540">
    <property type="entry name" value="GT2_GlmU_N_bac"/>
    <property type="match status" value="1"/>
</dbReference>
<dbReference type="CDD" id="cd03353">
    <property type="entry name" value="LbH_GlmU_C"/>
    <property type="match status" value="1"/>
</dbReference>
<dbReference type="Gene3D" id="2.160.10.10">
    <property type="entry name" value="Hexapeptide repeat proteins"/>
    <property type="match status" value="1"/>
</dbReference>
<dbReference type="Gene3D" id="3.90.550.10">
    <property type="entry name" value="Spore Coat Polysaccharide Biosynthesis Protein SpsA, Chain A"/>
    <property type="match status" value="1"/>
</dbReference>
<dbReference type="HAMAP" id="MF_01631">
    <property type="entry name" value="GlmU"/>
    <property type="match status" value="1"/>
</dbReference>
<dbReference type="InterPro" id="IPR005882">
    <property type="entry name" value="Bifunctional_GlmU"/>
</dbReference>
<dbReference type="InterPro" id="IPR050065">
    <property type="entry name" value="GlmU-like"/>
</dbReference>
<dbReference type="InterPro" id="IPR038009">
    <property type="entry name" value="GlmU_C_LbH"/>
</dbReference>
<dbReference type="InterPro" id="IPR001451">
    <property type="entry name" value="Hexapep"/>
</dbReference>
<dbReference type="InterPro" id="IPR018357">
    <property type="entry name" value="Hexapep_transf_CS"/>
</dbReference>
<dbReference type="InterPro" id="IPR005835">
    <property type="entry name" value="NTP_transferase_dom"/>
</dbReference>
<dbReference type="InterPro" id="IPR029044">
    <property type="entry name" value="Nucleotide-diphossugar_trans"/>
</dbReference>
<dbReference type="InterPro" id="IPR011004">
    <property type="entry name" value="Trimer_LpxA-like_sf"/>
</dbReference>
<dbReference type="NCBIfam" id="TIGR01173">
    <property type="entry name" value="glmU"/>
    <property type="match status" value="1"/>
</dbReference>
<dbReference type="NCBIfam" id="NF010934">
    <property type="entry name" value="PRK14354.1"/>
    <property type="match status" value="1"/>
</dbReference>
<dbReference type="PANTHER" id="PTHR43584:SF3">
    <property type="entry name" value="BIFUNCTIONAL PROTEIN GLMU"/>
    <property type="match status" value="1"/>
</dbReference>
<dbReference type="PANTHER" id="PTHR43584">
    <property type="entry name" value="NUCLEOTIDYL TRANSFERASE"/>
    <property type="match status" value="1"/>
</dbReference>
<dbReference type="Pfam" id="PF00132">
    <property type="entry name" value="Hexapep"/>
    <property type="match status" value="3"/>
</dbReference>
<dbReference type="Pfam" id="PF00483">
    <property type="entry name" value="NTP_transferase"/>
    <property type="match status" value="1"/>
</dbReference>
<dbReference type="SUPFAM" id="SSF53448">
    <property type="entry name" value="Nucleotide-diphospho-sugar transferases"/>
    <property type="match status" value="1"/>
</dbReference>
<dbReference type="SUPFAM" id="SSF51161">
    <property type="entry name" value="Trimeric LpxA-like enzymes"/>
    <property type="match status" value="1"/>
</dbReference>
<dbReference type="PROSITE" id="PS00101">
    <property type="entry name" value="HEXAPEP_TRANSFERASES"/>
    <property type="match status" value="1"/>
</dbReference>
<organism>
    <name type="scientific">Listeria innocua serovar 6a (strain ATCC BAA-680 / CLIP 11262)</name>
    <dbReference type="NCBI Taxonomy" id="272626"/>
    <lineage>
        <taxon>Bacteria</taxon>
        <taxon>Bacillati</taxon>
        <taxon>Bacillota</taxon>
        <taxon>Bacilli</taxon>
        <taxon>Bacillales</taxon>
        <taxon>Listeriaceae</taxon>
        <taxon>Listeria</taxon>
    </lineage>
</organism>
<protein>
    <recommendedName>
        <fullName evidence="1">Bifunctional protein GlmU</fullName>
    </recommendedName>
    <domain>
        <recommendedName>
            <fullName evidence="1">UDP-N-acetylglucosamine pyrophosphorylase</fullName>
            <ecNumber evidence="1">2.7.7.23</ecNumber>
        </recommendedName>
        <alternativeName>
            <fullName evidence="1">N-acetylglucosamine-1-phosphate uridyltransferase</fullName>
        </alternativeName>
    </domain>
    <domain>
        <recommendedName>
            <fullName evidence="1">Glucosamine-1-phosphate N-acetyltransferase</fullName>
            <ecNumber evidence="1">2.3.1.157</ecNumber>
        </recommendedName>
    </domain>
</protein>
<name>GLMU_LISIN</name>
<proteinExistence type="inferred from homology"/>
<evidence type="ECO:0000255" key="1">
    <source>
        <dbReference type="HAMAP-Rule" id="MF_01631"/>
    </source>
</evidence>